<dbReference type="EC" id="1.1.1.267" evidence="1"/>
<dbReference type="EMBL" id="CP000812">
    <property type="protein sequence ID" value="ABV33224.1"/>
    <property type="molecule type" value="Genomic_DNA"/>
</dbReference>
<dbReference type="RefSeq" id="WP_012002705.1">
    <property type="nucleotide sequence ID" value="NZ_BSDV01000001.1"/>
</dbReference>
<dbReference type="SMR" id="A8F4Z0"/>
<dbReference type="STRING" id="416591.Tlet_0658"/>
<dbReference type="KEGG" id="tle:Tlet_0658"/>
<dbReference type="eggNOG" id="COG0743">
    <property type="taxonomic scope" value="Bacteria"/>
</dbReference>
<dbReference type="HOGENOM" id="CLU_035714_0_0_0"/>
<dbReference type="OrthoDB" id="9806546at2"/>
<dbReference type="UniPathway" id="UPA00056">
    <property type="reaction ID" value="UER00092"/>
</dbReference>
<dbReference type="Proteomes" id="UP000002016">
    <property type="component" value="Chromosome"/>
</dbReference>
<dbReference type="GO" id="GO:0030604">
    <property type="term" value="F:1-deoxy-D-xylulose-5-phosphate reductoisomerase activity"/>
    <property type="evidence" value="ECO:0007669"/>
    <property type="project" value="UniProtKB-UniRule"/>
</dbReference>
<dbReference type="GO" id="GO:0030145">
    <property type="term" value="F:manganese ion binding"/>
    <property type="evidence" value="ECO:0007669"/>
    <property type="project" value="TreeGrafter"/>
</dbReference>
<dbReference type="GO" id="GO:0070402">
    <property type="term" value="F:NADPH binding"/>
    <property type="evidence" value="ECO:0007669"/>
    <property type="project" value="InterPro"/>
</dbReference>
<dbReference type="GO" id="GO:0051484">
    <property type="term" value="P:isopentenyl diphosphate biosynthetic process, methylerythritol 4-phosphate pathway involved in terpenoid biosynthetic process"/>
    <property type="evidence" value="ECO:0007669"/>
    <property type="project" value="TreeGrafter"/>
</dbReference>
<dbReference type="Gene3D" id="1.10.1740.10">
    <property type="match status" value="1"/>
</dbReference>
<dbReference type="Gene3D" id="3.40.50.720">
    <property type="entry name" value="NAD(P)-binding Rossmann-like Domain"/>
    <property type="match status" value="1"/>
</dbReference>
<dbReference type="HAMAP" id="MF_00183">
    <property type="entry name" value="DXP_reductoisom"/>
    <property type="match status" value="1"/>
</dbReference>
<dbReference type="InterPro" id="IPR003821">
    <property type="entry name" value="DXP_reductoisomerase"/>
</dbReference>
<dbReference type="InterPro" id="IPR013644">
    <property type="entry name" value="DXP_reductoisomerase_C"/>
</dbReference>
<dbReference type="InterPro" id="IPR013512">
    <property type="entry name" value="DXP_reductoisomerase_N"/>
</dbReference>
<dbReference type="InterPro" id="IPR026877">
    <property type="entry name" value="DXPR_C"/>
</dbReference>
<dbReference type="InterPro" id="IPR036169">
    <property type="entry name" value="DXPR_C_sf"/>
</dbReference>
<dbReference type="InterPro" id="IPR036291">
    <property type="entry name" value="NAD(P)-bd_dom_sf"/>
</dbReference>
<dbReference type="PANTHER" id="PTHR30525">
    <property type="entry name" value="1-DEOXY-D-XYLULOSE 5-PHOSPHATE REDUCTOISOMERASE"/>
    <property type="match status" value="1"/>
</dbReference>
<dbReference type="PANTHER" id="PTHR30525:SF0">
    <property type="entry name" value="1-DEOXY-D-XYLULOSE 5-PHOSPHATE REDUCTOISOMERASE, CHLOROPLASTIC"/>
    <property type="match status" value="1"/>
</dbReference>
<dbReference type="Pfam" id="PF08436">
    <property type="entry name" value="DXP_redisom_C"/>
    <property type="match status" value="1"/>
</dbReference>
<dbReference type="Pfam" id="PF02670">
    <property type="entry name" value="DXP_reductoisom"/>
    <property type="match status" value="2"/>
</dbReference>
<dbReference type="Pfam" id="PF13288">
    <property type="entry name" value="DXPR_C"/>
    <property type="match status" value="1"/>
</dbReference>
<dbReference type="PIRSF" id="PIRSF006205">
    <property type="entry name" value="Dxp_reductismrs"/>
    <property type="match status" value="1"/>
</dbReference>
<dbReference type="SUPFAM" id="SSF69055">
    <property type="entry name" value="1-deoxy-D-xylulose-5-phosphate reductoisomerase, C-terminal domain"/>
    <property type="match status" value="1"/>
</dbReference>
<dbReference type="SUPFAM" id="SSF55347">
    <property type="entry name" value="Glyceraldehyde-3-phosphate dehydrogenase-like, C-terminal domain"/>
    <property type="match status" value="1"/>
</dbReference>
<dbReference type="SUPFAM" id="SSF51735">
    <property type="entry name" value="NAD(P)-binding Rossmann-fold domains"/>
    <property type="match status" value="1"/>
</dbReference>
<proteinExistence type="inferred from homology"/>
<protein>
    <recommendedName>
        <fullName evidence="1">1-deoxy-D-xylulose 5-phosphate reductoisomerase</fullName>
        <shortName evidence="1">DXP reductoisomerase</shortName>
        <ecNumber evidence="1">1.1.1.267</ecNumber>
    </recommendedName>
    <alternativeName>
        <fullName evidence="1">1-deoxyxylulose-5-phosphate reductoisomerase</fullName>
    </alternativeName>
    <alternativeName>
        <fullName evidence="1">2-C-methyl-D-erythritol 4-phosphate synthase</fullName>
    </alternativeName>
</protein>
<feature type="chain" id="PRO_1000058419" description="1-deoxy-D-xylulose 5-phosphate reductoisomerase">
    <location>
        <begin position="1"/>
        <end position="359"/>
    </location>
</feature>
<feature type="binding site" evidence="1">
    <location>
        <position position="12"/>
    </location>
    <ligand>
        <name>NADPH</name>
        <dbReference type="ChEBI" id="CHEBI:57783"/>
    </ligand>
</feature>
<feature type="binding site" evidence="1">
    <location>
        <position position="13"/>
    </location>
    <ligand>
        <name>NADPH</name>
        <dbReference type="ChEBI" id="CHEBI:57783"/>
    </ligand>
</feature>
<feature type="binding site" evidence="1">
    <location>
        <position position="14"/>
    </location>
    <ligand>
        <name>NADPH</name>
        <dbReference type="ChEBI" id="CHEBI:57783"/>
    </ligand>
</feature>
<feature type="binding site" evidence="1">
    <location>
        <position position="15"/>
    </location>
    <ligand>
        <name>NADPH</name>
        <dbReference type="ChEBI" id="CHEBI:57783"/>
    </ligand>
</feature>
<feature type="binding site" evidence="1">
    <location>
        <position position="38"/>
    </location>
    <ligand>
        <name>NADPH</name>
        <dbReference type="ChEBI" id="CHEBI:57783"/>
    </ligand>
</feature>
<feature type="binding site" evidence="1">
    <location>
        <position position="39"/>
    </location>
    <ligand>
        <name>NADPH</name>
        <dbReference type="ChEBI" id="CHEBI:57783"/>
    </ligand>
</feature>
<feature type="binding site" evidence="1">
    <location>
        <position position="105"/>
    </location>
    <ligand>
        <name>1-deoxy-D-xylulose 5-phosphate</name>
        <dbReference type="ChEBI" id="CHEBI:57792"/>
    </ligand>
</feature>
<feature type="binding site" evidence="1">
    <location>
        <position position="106"/>
    </location>
    <ligand>
        <name>NADPH</name>
        <dbReference type="ChEBI" id="CHEBI:57783"/>
    </ligand>
</feature>
<feature type="binding site" evidence="1">
    <location>
        <position position="130"/>
    </location>
    <ligand>
        <name>Mn(2+)</name>
        <dbReference type="ChEBI" id="CHEBI:29035"/>
    </ligand>
</feature>
<feature type="binding site" evidence="1">
    <location>
        <position position="131"/>
    </location>
    <ligand>
        <name>1-deoxy-D-xylulose 5-phosphate</name>
        <dbReference type="ChEBI" id="CHEBI:57792"/>
    </ligand>
</feature>
<feature type="binding site" evidence="1">
    <location>
        <position position="132"/>
    </location>
    <ligand>
        <name>1-deoxy-D-xylulose 5-phosphate</name>
        <dbReference type="ChEBI" id="CHEBI:57792"/>
    </ligand>
</feature>
<feature type="binding site" evidence="1">
    <location>
        <position position="132"/>
    </location>
    <ligand>
        <name>Mn(2+)</name>
        <dbReference type="ChEBI" id="CHEBI:29035"/>
    </ligand>
</feature>
<feature type="binding site" evidence="1">
    <location>
        <position position="152"/>
    </location>
    <ligand>
        <name>1-deoxy-D-xylulose 5-phosphate</name>
        <dbReference type="ChEBI" id="CHEBI:57792"/>
    </ligand>
</feature>
<feature type="binding site" evidence="1">
    <location>
        <position position="175"/>
    </location>
    <ligand>
        <name>1-deoxy-D-xylulose 5-phosphate</name>
        <dbReference type="ChEBI" id="CHEBI:57792"/>
    </ligand>
</feature>
<feature type="binding site" evidence="1">
    <location>
        <position position="181"/>
    </location>
    <ligand>
        <name>NADPH</name>
        <dbReference type="ChEBI" id="CHEBI:57783"/>
    </ligand>
</feature>
<feature type="binding site" evidence="1">
    <location>
        <position position="188"/>
    </location>
    <ligand>
        <name>1-deoxy-D-xylulose 5-phosphate</name>
        <dbReference type="ChEBI" id="CHEBI:57792"/>
    </ligand>
</feature>
<feature type="binding site" evidence="1">
    <location>
        <position position="193"/>
    </location>
    <ligand>
        <name>1-deoxy-D-xylulose 5-phosphate</name>
        <dbReference type="ChEBI" id="CHEBI:57792"/>
    </ligand>
</feature>
<feature type="binding site" evidence="1">
    <location>
        <position position="194"/>
    </location>
    <ligand>
        <name>1-deoxy-D-xylulose 5-phosphate</name>
        <dbReference type="ChEBI" id="CHEBI:57792"/>
    </ligand>
</feature>
<feature type="binding site" evidence="1">
    <location>
        <position position="197"/>
    </location>
    <ligand>
        <name>1-deoxy-D-xylulose 5-phosphate</name>
        <dbReference type="ChEBI" id="CHEBI:57792"/>
    </ligand>
</feature>
<feature type="binding site" evidence="1">
    <location>
        <position position="197"/>
    </location>
    <ligand>
        <name>Mn(2+)</name>
        <dbReference type="ChEBI" id="CHEBI:29035"/>
    </ligand>
</feature>
<sequence length="359" mass="40502">MDNRTIVILGITGSIGIQTVEVIQSLGNFHILGGTYHKNKDLADAISQKHNLSNLISTSRGYDLAIEMLEKLRPDITLVAIPGFSSLILALKAIEVSKRVLLASKEALVCGGWLIKEKLKNCETNLIPVDSEHTALMQIYEEPFEEVIITSSGGALRDWELHNLHNAKPKDVLKHPVWKMGERITVDSATMVNKAFEVFEASEYFNIPISKIRVLIHKEGIVHAGILLCDSTIKLHLGFADMKVPIAYALTYPERKYKKPSWPDLVNTNLSFENVDETRYPAFKLLYEISENYAKRTAYNASDEIAVQNFLEEKIKFTDIPKVIEKVVESTNGQVRDLKDLIQIDKESRKKALEVIRCL</sequence>
<comment type="function">
    <text evidence="1">Catalyzes the NADPH-dependent rearrangement and reduction of 1-deoxy-D-xylulose-5-phosphate (DXP) to 2-C-methyl-D-erythritol 4-phosphate (MEP).</text>
</comment>
<comment type="catalytic activity">
    <reaction evidence="1">
        <text>2-C-methyl-D-erythritol 4-phosphate + NADP(+) = 1-deoxy-D-xylulose 5-phosphate + NADPH + H(+)</text>
        <dbReference type="Rhea" id="RHEA:13717"/>
        <dbReference type="ChEBI" id="CHEBI:15378"/>
        <dbReference type="ChEBI" id="CHEBI:57783"/>
        <dbReference type="ChEBI" id="CHEBI:57792"/>
        <dbReference type="ChEBI" id="CHEBI:58262"/>
        <dbReference type="ChEBI" id="CHEBI:58349"/>
        <dbReference type="EC" id="1.1.1.267"/>
    </reaction>
    <physiologicalReaction direction="right-to-left" evidence="1">
        <dbReference type="Rhea" id="RHEA:13719"/>
    </physiologicalReaction>
</comment>
<comment type="cofactor">
    <cofactor evidence="1">
        <name>Mg(2+)</name>
        <dbReference type="ChEBI" id="CHEBI:18420"/>
    </cofactor>
    <cofactor evidence="1">
        <name>Mn(2+)</name>
        <dbReference type="ChEBI" id="CHEBI:29035"/>
    </cofactor>
</comment>
<comment type="pathway">
    <text evidence="1">Isoprenoid biosynthesis; isopentenyl diphosphate biosynthesis via DXP pathway; isopentenyl diphosphate from 1-deoxy-D-xylulose 5-phosphate: step 1/6.</text>
</comment>
<comment type="similarity">
    <text evidence="1">Belongs to the DXR family.</text>
</comment>
<accession>A8F4Z0</accession>
<reference key="1">
    <citation type="submission" date="2007-08" db="EMBL/GenBank/DDBJ databases">
        <title>Complete sequence of Thermotoga lettingae TMO.</title>
        <authorList>
            <consortium name="US DOE Joint Genome Institute"/>
            <person name="Copeland A."/>
            <person name="Lucas S."/>
            <person name="Lapidus A."/>
            <person name="Barry K."/>
            <person name="Glavina del Rio T."/>
            <person name="Dalin E."/>
            <person name="Tice H."/>
            <person name="Pitluck S."/>
            <person name="Foster B."/>
            <person name="Bruce D."/>
            <person name="Schmutz J."/>
            <person name="Larimer F."/>
            <person name="Land M."/>
            <person name="Hauser L."/>
            <person name="Kyrpides N."/>
            <person name="Mikhailova N."/>
            <person name="Nelson K."/>
            <person name="Gogarten J.P."/>
            <person name="Noll K."/>
            <person name="Richardson P."/>
        </authorList>
    </citation>
    <scope>NUCLEOTIDE SEQUENCE [LARGE SCALE GENOMIC DNA]</scope>
    <source>
        <strain>ATCC BAA-301 / DSM 14385 / NBRC 107922 / TMO</strain>
    </source>
</reference>
<keyword id="KW-0414">Isoprene biosynthesis</keyword>
<keyword id="KW-0464">Manganese</keyword>
<keyword id="KW-0479">Metal-binding</keyword>
<keyword id="KW-0521">NADP</keyword>
<keyword id="KW-0560">Oxidoreductase</keyword>
<keyword id="KW-1185">Reference proteome</keyword>
<name>DXR_PSELT</name>
<organism>
    <name type="scientific">Pseudothermotoga lettingae (strain ATCC BAA-301 / DSM 14385 / NBRC 107922 / TMO)</name>
    <name type="common">Thermotoga lettingae</name>
    <dbReference type="NCBI Taxonomy" id="416591"/>
    <lineage>
        <taxon>Bacteria</taxon>
        <taxon>Thermotogati</taxon>
        <taxon>Thermotogota</taxon>
        <taxon>Thermotogae</taxon>
        <taxon>Thermotogales</taxon>
        <taxon>Thermotogaceae</taxon>
        <taxon>Pseudothermotoga</taxon>
    </lineage>
</organism>
<gene>
    <name evidence="1" type="primary">dxr</name>
    <name type="ordered locus">Tlet_0658</name>
</gene>
<evidence type="ECO:0000255" key="1">
    <source>
        <dbReference type="HAMAP-Rule" id="MF_00183"/>
    </source>
</evidence>